<gene>
    <name evidence="2" type="primary">hbd</name>
    <name evidence="2" type="ordered locus">pE33L466_0384</name>
</gene>
<geneLocation type="plasmid">
    <name>pE33L466</name>
</geneLocation>
<evidence type="ECO:0000255" key="1">
    <source>
        <dbReference type="HAMAP-Rule" id="MF_02129"/>
    </source>
</evidence>
<evidence type="ECO:0000312" key="2">
    <source>
        <dbReference type="EMBL" id="AAY60525.1"/>
    </source>
</evidence>
<feature type="chain" id="PRO_0000417896" description="L-carnitine dehydrogenase">
    <location>
        <begin position="1"/>
        <end position="326"/>
    </location>
</feature>
<feature type="binding site" evidence="1">
    <location>
        <begin position="19"/>
        <end position="24"/>
    </location>
    <ligand>
        <name>NAD(+)</name>
        <dbReference type="ChEBI" id="CHEBI:57540"/>
    </ligand>
</feature>
<keyword id="KW-0963">Cytoplasm</keyword>
<keyword id="KW-0520">NAD</keyword>
<keyword id="KW-0560">Oxidoreductase</keyword>
<keyword id="KW-0614">Plasmid</keyword>
<sequence>MERLNNMGKNSIKKVTVVGTGVIGNGWISRFLSQGYDVVATDPAKNAEVRMRQSIENAWPALEKQGLAEGASKDRLTFELDLAKAVADADLIQENVPEREALKRRVLAEIDHFSKSEAIIASSTSGLKPSILQEDCQRPERVIVAHPFNPVYLIPLVEVIGGKDTSPETINISEQFYQSIKMKPLVISTEVEGHIADRLMEAIWREALHLINDGVATTEEVDAAIIYGPGLRWALMGPFLTLHLAGGEQGMRYMLEQFGPALKLPWTKLVAPELTNELANRVVEGCEAQTTGYSIKKLEQRRDEFLIELIQLLEKYWPGANLKGKL</sequence>
<organism>
    <name type="scientific">Bacillus cereus (strain ZK / E33L)</name>
    <dbReference type="NCBI Taxonomy" id="288681"/>
    <lineage>
        <taxon>Bacteria</taxon>
        <taxon>Bacillati</taxon>
        <taxon>Bacillota</taxon>
        <taxon>Bacilli</taxon>
        <taxon>Bacillales</taxon>
        <taxon>Bacillaceae</taxon>
        <taxon>Bacillus</taxon>
        <taxon>Bacillus cereus group</taxon>
    </lineage>
</organism>
<accession>Q4V182</accession>
<reference key="1">
    <citation type="journal article" date="2006" name="J. Bacteriol.">
        <title>Pathogenomic sequence analysis of Bacillus cereus and Bacillus thuringiensis isolates closely related to Bacillus anthracis.</title>
        <authorList>
            <person name="Han C.S."/>
            <person name="Xie G."/>
            <person name="Challacombe J.F."/>
            <person name="Altherr M.R."/>
            <person name="Bhotika S.S."/>
            <person name="Bruce D."/>
            <person name="Campbell C.S."/>
            <person name="Campbell M.L."/>
            <person name="Chen J."/>
            <person name="Chertkov O."/>
            <person name="Cleland C."/>
            <person name="Dimitrijevic M."/>
            <person name="Doggett N.A."/>
            <person name="Fawcett J.J."/>
            <person name="Glavina T."/>
            <person name="Goodwin L.A."/>
            <person name="Hill K.K."/>
            <person name="Hitchcock P."/>
            <person name="Jackson P.J."/>
            <person name="Keim P."/>
            <person name="Kewalramani A.R."/>
            <person name="Longmire J."/>
            <person name="Lucas S."/>
            <person name="Malfatti S."/>
            <person name="McMurry K."/>
            <person name="Meincke L.J."/>
            <person name="Misra M."/>
            <person name="Moseman B.L."/>
            <person name="Mundt M."/>
            <person name="Munk A.C."/>
            <person name="Okinaka R.T."/>
            <person name="Parson-Quintana B."/>
            <person name="Reilly L.P."/>
            <person name="Richardson P."/>
            <person name="Robinson D.L."/>
            <person name="Rubin E."/>
            <person name="Saunders E."/>
            <person name="Tapia R."/>
            <person name="Tesmer J.G."/>
            <person name="Thayer N."/>
            <person name="Thompson L.S."/>
            <person name="Tice H."/>
            <person name="Ticknor L.O."/>
            <person name="Wills P.L."/>
            <person name="Brettin T.S."/>
            <person name="Gilna P."/>
        </authorList>
    </citation>
    <scope>NUCLEOTIDE SEQUENCE [LARGE SCALE GENOMIC DNA]</scope>
    <source>
        <strain>ZK / E33L</strain>
    </source>
</reference>
<dbReference type="EC" id="1.1.1.108" evidence="1"/>
<dbReference type="EMBL" id="CP000040">
    <property type="protein sequence ID" value="AAY60525.1"/>
    <property type="molecule type" value="Genomic_DNA"/>
</dbReference>
<dbReference type="RefSeq" id="WP_000440492.1">
    <property type="nucleotide sequence ID" value="NC_007103.1"/>
</dbReference>
<dbReference type="SMR" id="Q4V182"/>
<dbReference type="KEGG" id="bcz:pE33L466_0384"/>
<dbReference type="UniPathway" id="UPA00117"/>
<dbReference type="Proteomes" id="UP000002612">
    <property type="component" value="Plasmid pE33L466"/>
</dbReference>
<dbReference type="GO" id="GO:0005737">
    <property type="term" value="C:cytoplasm"/>
    <property type="evidence" value="ECO:0007669"/>
    <property type="project" value="UniProtKB-SubCell"/>
</dbReference>
<dbReference type="GO" id="GO:0047728">
    <property type="term" value="F:carnitine 3-dehydrogenase activity"/>
    <property type="evidence" value="ECO:0007669"/>
    <property type="project" value="UniProtKB-UniRule"/>
</dbReference>
<dbReference type="GO" id="GO:0070403">
    <property type="term" value="F:NAD+ binding"/>
    <property type="evidence" value="ECO:0007669"/>
    <property type="project" value="InterPro"/>
</dbReference>
<dbReference type="GO" id="GO:0009437">
    <property type="term" value="P:carnitine metabolic process"/>
    <property type="evidence" value="ECO:0007669"/>
    <property type="project" value="UniProtKB-UniRule"/>
</dbReference>
<dbReference type="GO" id="GO:0009056">
    <property type="term" value="P:catabolic process"/>
    <property type="evidence" value="ECO:0007669"/>
    <property type="project" value="UniProtKB-ARBA"/>
</dbReference>
<dbReference type="GO" id="GO:0006631">
    <property type="term" value="P:fatty acid metabolic process"/>
    <property type="evidence" value="ECO:0007669"/>
    <property type="project" value="InterPro"/>
</dbReference>
<dbReference type="Gene3D" id="1.10.1040.10">
    <property type="entry name" value="N-(1-d-carboxylethyl)-l-norvaline Dehydrogenase, domain 2"/>
    <property type="match status" value="1"/>
</dbReference>
<dbReference type="Gene3D" id="3.40.50.720">
    <property type="entry name" value="NAD(P)-binding Rossmann-like Domain"/>
    <property type="match status" value="1"/>
</dbReference>
<dbReference type="HAMAP" id="MF_02129">
    <property type="entry name" value="L_carnitine_dehydrog"/>
    <property type="match status" value="1"/>
</dbReference>
<dbReference type="InterPro" id="IPR006176">
    <property type="entry name" value="3-OHacyl-CoA_DH_NAD-bd"/>
</dbReference>
<dbReference type="InterPro" id="IPR006108">
    <property type="entry name" value="3HC_DH_C"/>
</dbReference>
<dbReference type="InterPro" id="IPR008927">
    <property type="entry name" value="6-PGluconate_DH-like_C_sf"/>
</dbReference>
<dbReference type="InterPro" id="IPR013328">
    <property type="entry name" value="6PGD_dom2"/>
</dbReference>
<dbReference type="InterPro" id="IPR026578">
    <property type="entry name" value="L-carnitine_dehydrogenase"/>
</dbReference>
<dbReference type="InterPro" id="IPR036291">
    <property type="entry name" value="NAD(P)-bd_dom_sf"/>
</dbReference>
<dbReference type="NCBIfam" id="NF005471">
    <property type="entry name" value="PRK07066.1"/>
    <property type="match status" value="1"/>
</dbReference>
<dbReference type="PANTHER" id="PTHR48075">
    <property type="entry name" value="3-HYDROXYACYL-COA DEHYDROGENASE FAMILY PROTEIN"/>
    <property type="match status" value="1"/>
</dbReference>
<dbReference type="PANTHER" id="PTHR48075:SF5">
    <property type="entry name" value="3-HYDROXYBUTYRYL-COA DEHYDROGENASE"/>
    <property type="match status" value="1"/>
</dbReference>
<dbReference type="Pfam" id="PF00725">
    <property type="entry name" value="3HCDH"/>
    <property type="match status" value="1"/>
</dbReference>
<dbReference type="Pfam" id="PF02737">
    <property type="entry name" value="3HCDH_N"/>
    <property type="match status" value="1"/>
</dbReference>
<dbReference type="SUPFAM" id="SSF48179">
    <property type="entry name" value="6-phosphogluconate dehydrogenase C-terminal domain-like"/>
    <property type="match status" value="1"/>
</dbReference>
<dbReference type="SUPFAM" id="SSF51735">
    <property type="entry name" value="NAD(P)-binding Rossmann-fold domains"/>
    <property type="match status" value="1"/>
</dbReference>
<protein>
    <recommendedName>
        <fullName evidence="1">L-carnitine dehydrogenase</fullName>
        <shortName evidence="1">CDH</shortName>
        <shortName evidence="1">L-CDH</shortName>
        <ecNumber evidence="1">1.1.1.108</ecNumber>
    </recommendedName>
</protein>
<comment type="function">
    <text evidence="1">Catalyzes the NAD(+)-dependent oxidation of L-carnitine to 3-dehydrocarnitine.</text>
</comment>
<comment type="catalytic activity">
    <reaction evidence="1">
        <text>carnitine + NAD(+) = 3-dehydrocarnitine + NADH + H(+)</text>
        <dbReference type="Rhea" id="RHEA:19265"/>
        <dbReference type="ChEBI" id="CHEBI:15378"/>
        <dbReference type="ChEBI" id="CHEBI:17126"/>
        <dbReference type="ChEBI" id="CHEBI:57540"/>
        <dbReference type="ChEBI" id="CHEBI:57885"/>
        <dbReference type="ChEBI" id="CHEBI:57945"/>
        <dbReference type="EC" id="1.1.1.108"/>
    </reaction>
</comment>
<comment type="pathway">
    <text evidence="1">Amine and polyamine metabolism; carnitine metabolism.</text>
</comment>
<comment type="subunit">
    <text evidence="1">Homodimer.</text>
</comment>
<comment type="subcellular location">
    <subcellularLocation>
        <location evidence="1">Cytoplasm</location>
    </subcellularLocation>
</comment>
<comment type="similarity">
    <text evidence="1">Belongs to the 3-hydroxyacyl-CoA dehydrogenase family. L-carnitine dehydrogenase subfamily.</text>
</comment>
<proteinExistence type="inferred from homology"/>
<name>LCDH_BACCZ</name>